<keyword id="KW-1203">Blood coagulation cascade inhibiting toxin</keyword>
<keyword id="KW-0106">Calcium</keyword>
<keyword id="KW-0903">Direct protein sequencing</keyword>
<keyword id="KW-1015">Disulfide bond</keyword>
<keyword id="KW-1199">Hemostasis impairing toxin</keyword>
<keyword id="KW-0378">Hydrolase</keyword>
<keyword id="KW-0442">Lipid degradation</keyword>
<keyword id="KW-0443">Lipid metabolism</keyword>
<keyword id="KW-0479">Metal-binding</keyword>
<keyword id="KW-0528">Neurotoxin</keyword>
<keyword id="KW-0964">Secreted</keyword>
<keyword id="KW-0800">Toxin</keyword>
<reference key="1">
    <citation type="journal article" date="1989" name="J. Biol. Chem.">
        <title>Nigexine, a phospholipase A2 from cobra venom with cytotoxic properties not related to esterase activity. Purification, amino acid sequence, and biological properties.</title>
        <authorList>
            <person name="Chwetzoff S."/>
            <person name="Tsunasawa S."/>
            <person name="Sakiyama F."/>
            <person name="Menez A."/>
        </authorList>
    </citation>
    <scope>PROTEIN SEQUENCE</scope>
    <scope>FUNCTION</scope>
    <source>
        <tissue>Venom</tissue>
    </source>
</reference>
<reference key="2">
    <citation type="journal article" date="1991" name="Toxicon">
        <title>Neuromuscular effects of nigexine, a basic phospholipase A2 from Naja nigricollis venom.</title>
        <authorList>
            <person name="Rowan E.G."/>
            <person name="Harvey A.L."/>
            <person name="Menez A."/>
        </authorList>
    </citation>
    <scope>FUNCTION</scope>
</reference>
<reference key="3">
    <citation type="journal article" date="2005" name="Toxicon">
        <title>Structure-function relationships and mechanism of anticoagulant phospholipase A2 enzymes from snake venoms.</title>
        <authorList>
            <person name="Kini R.M."/>
        </authorList>
    </citation>
    <scope>REVIEW</scope>
    <scope>MOTIF</scope>
</reference>
<proteinExistence type="evidence at protein level"/>
<protein>
    <recommendedName>
        <fullName>Basic phospholipase A2 nigexine</fullName>
        <shortName>svPLA2</shortName>
        <ecNumber>3.1.1.4</ecNumber>
    </recommendedName>
    <alternativeName>
        <fullName>Phosphatidylcholine 2-acylhydrolase</fullName>
    </alternativeName>
</protein>
<evidence type="ECO:0000250" key="1"/>
<evidence type="ECO:0000255" key="2">
    <source>
        <dbReference type="PROSITE-ProRule" id="PRU10035"/>
    </source>
</evidence>
<evidence type="ECO:0000255" key="3">
    <source>
        <dbReference type="PROSITE-ProRule" id="PRU10036"/>
    </source>
</evidence>
<evidence type="ECO:0000269" key="4">
    <source>
    </source>
</evidence>
<evidence type="ECO:0000269" key="5">
    <source>
    </source>
</evidence>
<evidence type="ECO:0000305" key="6"/>
<dbReference type="EC" id="3.1.1.4"/>
<dbReference type="SMR" id="P14556"/>
<dbReference type="GO" id="GO:0005576">
    <property type="term" value="C:extracellular region"/>
    <property type="evidence" value="ECO:0007669"/>
    <property type="project" value="UniProtKB-SubCell"/>
</dbReference>
<dbReference type="GO" id="GO:0005509">
    <property type="term" value="F:calcium ion binding"/>
    <property type="evidence" value="ECO:0007669"/>
    <property type="project" value="InterPro"/>
</dbReference>
<dbReference type="GO" id="GO:0047498">
    <property type="term" value="F:calcium-dependent phospholipase A2 activity"/>
    <property type="evidence" value="ECO:0007669"/>
    <property type="project" value="TreeGrafter"/>
</dbReference>
<dbReference type="GO" id="GO:0005543">
    <property type="term" value="F:phospholipid binding"/>
    <property type="evidence" value="ECO:0007669"/>
    <property type="project" value="TreeGrafter"/>
</dbReference>
<dbReference type="GO" id="GO:0090729">
    <property type="term" value="F:toxin activity"/>
    <property type="evidence" value="ECO:0007669"/>
    <property type="project" value="UniProtKB-KW"/>
</dbReference>
<dbReference type="GO" id="GO:0050482">
    <property type="term" value="P:arachidonate secretion"/>
    <property type="evidence" value="ECO:0007669"/>
    <property type="project" value="InterPro"/>
</dbReference>
<dbReference type="GO" id="GO:0016042">
    <property type="term" value="P:lipid catabolic process"/>
    <property type="evidence" value="ECO:0007669"/>
    <property type="project" value="UniProtKB-KW"/>
</dbReference>
<dbReference type="GO" id="GO:0006644">
    <property type="term" value="P:phospholipid metabolic process"/>
    <property type="evidence" value="ECO:0007669"/>
    <property type="project" value="InterPro"/>
</dbReference>
<dbReference type="CDD" id="cd00125">
    <property type="entry name" value="PLA2c"/>
    <property type="match status" value="1"/>
</dbReference>
<dbReference type="FunFam" id="1.20.90.10:FF:000007">
    <property type="entry name" value="Acidic phospholipase A2"/>
    <property type="match status" value="1"/>
</dbReference>
<dbReference type="Gene3D" id="1.20.90.10">
    <property type="entry name" value="Phospholipase A2 domain"/>
    <property type="match status" value="1"/>
</dbReference>
<dbReference type="InterPro" id="IPR001211">
    <property type="entry name" value="PLipase_A2"/>
</dbReference>
<dbReference type="InterPro" id="IPR033112">
    <property type="entry name" value="PLipase_A2_Asp_AS"/>
</dbReference>
<dbReference type="InterPro" id="IPR016090">
    <property type="entry name" value="PLipase_A2_dom"/>
</dbReference>
<dbReference type="InterPro" id="IPR036444">
    <property type="entry name" value="PLipase_A2_dom_sf"/>
</dbReference>
<dbReference type="InterPro" id="IPR033113">
    <property type="entry name" value="PLipase_A2_His_AS"/>
</dbReference>
<dbReference type="PANTHER" id="PTHR11716:SF51">
    <property type="entry name" value="PHOSPHOLIPASE A2"/>
    <property type="match status" value="1"/>
</dbReference>
<dbReference type="PANTHER" id="PTHR11716">
    <property type="entry name" value="PHOSPHOLIPASE A2 FAMILY MEMBER"/>
    <property type="match status" value="1"/>
</dbReference>
<dbReference type="Pfam" id="PF00068">
    <property type="entry name" value="Phospholip_A2_1"/>
    <property type="match status" value="1"/>
</dbReference>
<dbReference type="PRINTS" id="PR00389">
    <property type="entry name" value="PHPHLIPASEA2"/>
</dbReference>
<dbReference type="SMART" id="SM00085">
    <property type="entry name" value="PA2c"/>
    <property type="match status" value="1"/>
</dbReference>
<dbReference type="SUPFAM" id="SSF48619">
    <property type="entry name" value="Phospholipase A2, PLA2"/>
    <property type="match status" value="1"/>
</dbReference>
<dbReference type="PROSITE" id="PS00119">
    <property type="entry name" value="PA2_ASP"/>
    <property type="match status" value="1"/>
</dbReference>
<dbReference type="PROSITE" id="PS00118">
    <property type="entry name" value="PA2_HIS"/>
    <property type="match status" value="1"/>
</dbReference>
<sequence length="118" mass="13340">NLYQFKNMIHCTVPSRPWWHFADYGCYCGRGGKGTPIDDLDRCCQVHDNCYEKAGKMGCWPYFTLYKYKCSKGTLTCNGRNGKCAAAVCNCDLVAANCFAGAPYINANYNIDFKKRCQ</sequence>
<comment type="function">
    <text evidence="4 5">Snake venom phospholipase A2 (PLA2) that shows anticoagulant activity, has cytotoxic activity and affects neuromuscular transmission in vitro. PLA2 catalyzes the calcium-dependent hydrolysis of the 2-acyl groups in 3-sn-phosphoglycerides.</text>
</comment>
<comment type="catalytic activity">
    <reaction evidence="2 3">
        <text>a 1,2-diacyl-sn-glycero-3-phosphocholine + H2O = a 1-acyl-sn-glycero-3-phosphocholine + a fatty acid + H(+)</text>
        <dbReference type="Rhea" id="RHEA:15801"/>
        <dbReference type="ChEBI" id="CHEBI:15377"/>
        <dbReference type="ChEBI" id="CHEBI:15378"/>
        <dbReference type="ChEBI" id="CHEBI:28868"/>
        <dbReference type="ChEBI" id="CHEBI:57643"/>
        <dbReference type="ChEBI" id="CHEBI:58168"/>
        <dbReference type="EC" id="3.1.1.4"/>
    </reaction>
</comment>
<comment type="cofactor">
    <cofactor evidence="1">
        <name>Ca(2+)</name>
        <dbReference type="ChEBI" id="CHEBI:29108"/>
    </cofactor>
    <text evidence="1">Binds 1 Ca(2+) ion.</text>
</comment>
<comment type="subcellular location">
    <subcellularLocation>
        <location>Secreted</location>
    </subcellularLocation>
</comment>
<comment type="tissue specificity">
    <text>Expressed by the venom gland.</text>
</comment>
<comment type="similarity">
    <text evidence="6">Belongs to the phospholipase A2 family. Group I subfamily. D49 sub-subfamily.</text>
</comment>
<comment type="caution">
    <text evidence="6">The venom of this snake was originally thought to be that of N.nigricollis.</text>
</comment>
<organism>
    <name type="scientific">Naja pallida</name>
    <name type="common">Red spitting cobra</name>
    <dbReference type="NCBI Taxonomy" id="8658"/>
    <lineage>
        <taxon>Eukaryota</taxon>
        <taxon>Metazoa</taxon>
        <taxon>Chordata</taxon>
        <taxon>Craniata</taxon>
        <taxon>Vertebrata</taxon>
        <taxon>Euteleostomi</taxon>
        <taxon>Lepidosauria</taxon>
        <taxon>Squamata</taxon>
        <taxon>Bifurcata</taxon>
        <taxon>Unidentata</taxon>
        <taxon>Episquamata</taxon>
        <taxon>Toxicofera</taxon>
        <taxon>Serpentes</taxon>
        <taxon>Colubroidea</taxon>
        <taxon>Elapidae</taxon>
        <taxon>Elapinae</taxon>
        <taxon>Naja</taxon>
    </lineage>
</organism>
<name>PA2B_NAJPA</name>
<feature type="chain" id="PRO_0000161672" description="Basic phospholipase A2 nigexine">
    <location>
        <begin position="1"/>
        <end position="118"/>
    </location>
</feature>
<feature type="short sequence motif" description="Coagulation factor Xa binding motif">
    <location>
        <begin position="52"/>
        <end position="69"/>
    </location>
</feature>
<feature type="active site" evidence="1">
    <location>
        <position position="47"/>
    </location>
</feature>
<feature type="active site" evidence="1">
    <location>
        <position position="92"/>
    </location>
</feature>
<feature type="binding site" evidence="1">
    <location>
        <position position="27"/>
    </location>
    <ligand>
        <name>Ca(2+)</name>
        <dbReference type="ChEBI" id="CHEBI:29108"/>
    </ligand>
</feature>
<feature type="binding site" evidence="1">
    <location>
        <position position="29"/>
    </location>
    <ligand>
        <name>Ca(2+)</name>
        <dbReference type="ChEBI" id="CHEBI:29108"/>
    </ligand>
</feature>
<feature type="binding site" evidence="1">
    <location>
        <position position="31"/>
    </location>
    <ligand>
        <name>Ca(2+)</name>
        <dbReference type="ChEBI" id="CHEBI:29108"/>
    </ligand>
</feature>
<feature type="binding site" evidence="1">
    <location>
        <position position="48"/>
    </location>
    <ligand>
        <name>Ca(2+)</name>
        <dbReference type="ChEBI" id="CHEBI:29108"/>
    </ligand>
</feature>
<feature type="disulfide bond" evidence="1">
    <location>
        <begin position="11"/>
        <end position="70"/>
    </location>
</feature>
<feature type="disulfide bond" evidence="1">
    <location>
        <begin position="26"/>
        <end position="117"/>
    </location>
</feature>
<feature type="disulfide bond" evidence="1">
    <location>
        <begin position="28"/>
        <end position="44"/>
    </location>
</feature>
<feature type="disulfide bond" evidence="1">
    <location>
        <begin position="43"/>
        <end position="98"/>
    </location>
</feature>
<feature type="disulfide bond" evidence="1">
    <location>
        <begin position="50"/>
        <end position="91"/>
    </location>
</feature>
<feature type="disulfide bond" evidence="1">
    <location>
        <begin position="59"/>
        <end position="84"/>
    </location>
</feature>
<feature type="disulfide bond" evidence="1">
    <location>
        <begin position="77"/>
        <end position="89"/>
    </location>
</feature>
<accession>P14556</accession>